<accession>C4ZSZ5</accession>
<protein>
    <recommendedName>
        <fullName evidence="1">Ribosomal protein L11 methyltransferase</fullName>
        <shortName evidence="1">L11 Mtase</shortName>
        <ecNumber evidence="1">2.1.1.-</ecNumber>
    </recommendedName>
</protein>
<reference key="1">
    <citation type="journal article" date="2009" name="J. Bacteriol.">
        <title>Genomic sequencing reveals regulatory mutations and recombinational events in the widely used MC4100 lineage of Escherichia coli K-12.</title>
        <authorList>
            <person name="Ferenci T."/>
            <person name="Zhou Z."/>
            <person name="Betteridge T."/>
            <person name="Ren Y."/>
            <person name="Liu Y."/>
            <person name="Feng L."/>
            <person name="Reeves P.R."/>
            <person name="Wang L."/>
        </authorList>
    </citation>
    <scope>NUCLEOTIDE SEQUENCE [LARGE SCALE GENOMIC DNA]</scope>
    <source>
        <strain>K12 / MC4100 / BW2952</strain>
    </source>
</reference>
<keyword id="KW-0963">Cytoplasm</keyword>
<keyword id="KW-0489">Methyltransferase</keyword>
<keyword id="KW-0949">S-adenosyl-L-methionine</keyword>
<keyword id="KW-0808">Transferase</keyword>
<gene>
    <name evidence="1" type="primary">prmA</name>
    <name type="ordered locus">BWG_2958</name>
</gene>
<name>PRMA_ECOBW</name>
<proteinExistence type="inferred from homology"/>
<dbReference type="EC" id="2.1.1.-" evidence="1"/>
<dbReference type="EMBL" id="CP001396">
    <property type="protein sequence ID" value="ACR63761.1"/>
    <property type="molecule type" value="Genomic_DNA"/>
</dbReference>
<dbReference type="RefSeq" id="WP_001145827.1">
    <property type="nucleotide sequence ID" value="NC_012759.1"/>
</dbReference>
<dbReference type="SMR" id="C4ZSZ5"/>
<dbReference type="GeneID" id="75206107"/>
<dbReference type="KEGG" id="ebw:BWG_2958"/>
<dbReference type="HOGENOM" id="CLU_049382_4_1_6"/>
<dbReference type="GO" id="GO:0005829">
    <property type="term" value="C:cytosol"/>
    <property type="evidence" value="ECO:0007669"/>
    <property type="project" value="TreeGrafter"/>
</dbReference>
<dbReference type="GO" id="GO:0016279">
    <property type="term" value="F:protein-lysine N-methyltransferase activity"/>
    <property type="evidence" value="ECO:0007669"/>
    <property type="project" value="TreeGrafter"/>
</dbReference>
<dbReference type="GO" id="GO:0032259">
    <property type="term" value="P:methylation"/>
    <property type="evidence" value="ECO:0007669"/>
    <property type="project" value="UniProtKB-KW"/>
</dbReference>
<dbReference type="CDD" id="cd02440">
    <property type="entry name" value="AdoMet_MTases"/>
    <property type="match status" value="1"/>
</dbReference>
<dbReference type="FunFam" id="3.40.50.150:FF:000021">
    <property type="entry name" value="Ribosomal protein L11 methyltransferase"/>
    <property type="match status" value="1"/>
</dbReference>
<dbReference type="Gene3D" id="3.40.50.150">
    <property type="entry name" value="Vaccinia Virus protein VP39"/>
    <property type="match status" value="1"/>
</dbReference>
<dbReference type="HAMAP" id="MF_00735">
    <property type="entry name" value="Methyltr_PrmA"/>
    <property type="match status" value="1"/>
</dbReference>
<dbReference type="InterPro" id="IPR050078">
    <property type="entry name" value="Ribosomal_L11_MeTrfase_PrmA"/>
</dbReference>
<dbReference type="InterPro" id="IPR004498">
    <property type="entry name" value="Ribosomal_PrmA_MeTrfase"/>
</dbReference>
<dbReference type="InterPro" id="IPR029063">
    <property type="entry name" value="SAM-dependent_MTases_sf"/>
</dbReference>
<dbReference type="NCBIfam" id="TIGR00406">
    <property type="entry name" value="prmA"/>
    <property type="match status" value="1"/>
</dbReference>
<dbReference type="PANTHER" id="PTHR43648">
    <property type="entry name" value="ELECTRON TRANSFER FLAVOPROTEIN BETA SUBUNIT LYSINE METHYLTRANSFERASE"/>
    <property type="match status" value="1"/>
</dbReference>
<dbReference type="PANTHER" id="PTHR43648:SF1">
    <property type="entry name" value="ELECTRON TRANSFER FLAVOPROTEIN BETA SUBUNIT LYSINE METHYLTRANSFERASE"/>
    <property type="match status" value="1"/>
</dbReference>
<dbReference type="Pfam" id="PF06325">
    <property type="entry name" value="PrmA"/>
    <property type="match status" value="1"/>
</dbReference>
<dbReference type="PIRSF" id="PIRSF000401">
    <property type="entry name" value="RPL11_MTase"/>
    <property type="match status" value="1"/>
</dbReference>
<dbReference type="SUPFAM" id="SSF53335">
    <property type="entry name" value="S-adenosyl-L-methionine-dependent methyltransferases"/>
    <property type="match status" value="1"/>
</dbReference>
<organism>
    <name type="scientific">Escherichia coli (strain K12 / MC4100 / BW2952)</name>
    <dbReference type="NCBI Taxonomy" id="595496"/>
    <lineage>
        <taxon>Bacteria</taxon>
        <taxon>Pseudomonadati</taxon>
        <taxon>Pseudomonadota</taxon>
        <taxon>Gammaproteobacteria</taxon>
        <taxon>Enterobacterales</taxon>
        <taxon>Enterobacteriaceae</taxon>
        <taxon>Escherichia</taxon>
    </lineage>
</organism>
<feature type="chain" id="PRO_1000212746" description="Ribosomal protein L11 methyltransferase">
    <location>
        <begin position="1"/>
        <end position="293"/>
    </location>
</feature>
<feature type="binding site" evidence="1">
    <location>
        <position position="145"/>
    </location>
    <ligand>
        <name>S-adenosyl-L-methionine</name>
        <dbReference type="ChEBI" id="CHEBI:59789"/>
    </ligand>
</feature>
<feature type="binding site" evidence="1">
    <location>
        <position position="166"/>
    </location>
    <ligand>
        <name>S-adenosyl-L-methionine</name>
        <dbReference type="ChEBI" id="CHEBI:59789"/>
    </ligand>
</feature>
<feature type="binding site" evidence="1">
    <location>
        <position position="188"/>
    </location>
    <ligand>
        <name>S-adenosyl-L-methionine</name>
        <dbReference type="ChEBI" id="CHEBI:59789"/>
    </ligand>
</feature>
<feature type="binding site" evidence="1">
    <location>
        <position position="230"/>
    </location>
    <ligand>
        <name>S-adenosyl-L-methionine</name>
        <dbReference type="ChEBI" id="CHEBI:59789"/>
    </ligand>
</feature>
<sequence length="293" mass="31877">MPWIQLKLNTTGANAEDLSDALMEAGAVSITFQDTHDTPVFEPLPGETRLWGDTDVIGLFDAETDMNDVVAILENHPLLGAGFAHKIEQLEDKDWEREWMDNFHPMRFGERLWICPSWRDVPDENAVNVMLDPGLAFGTGTHPTTSLCLQWLDSLDLTGKTVIDFGCGSGILAIAALKLGAAKAIGIDIDPQAIQASRDNAERNGVSDRLELYLPKDQPEEMKADVVVANILAGPLRELAPLISVLPVSGGLLGLSGILASQAESVCEAYADSFALDPVVEKEEWCRITGRKN</sequence>
<comment type="function">
    <text evidence="1">Methylates ribosomal protein L11.</text>
</comment>
<comment type="catalytic activity">
    <reaction evidence="1">
        <text>L-lysyl-[protein] + 3 S-adenosyl-L-methionine = N(6),N(6),N(6)-trimethyl-L-lysyl-[protein] + 3 S-adenosyl-L-homocysteine + 3 H(+)</text>
        <dbReference type="Rhea" id="RHEA:54192"/>
        <dbReference type="Rhea" id="RHEA-COMP:9752"/>
        <dbReference type="Rhea" id="RHEA-COMP:13826"/>
        <dbReference type="ChEBI" id="CHEBI:15378"/>
        <dbReference type="ChEBI" id="CHEBI:29969"/>
        <dbReference type="ChEBI" id="CHEBI:57856"/>
        <dbReference type="ChEBI" id="CHEBI:59789"/>
        <dbReference type="ChEBI" id="CHEBI:61961"/>
    </reaction>
</comment>
<comment type="subcellular location">
    <subcellularLocation>
        <location evidence="1">Cytoplasm</location>
    </subcellularLocation>
</comment>
<comment type="similarity">
    <text evidence="1">Belongs to the methyltransferase superfamily. PrmA family.</text>
</comment>
<evidence type="ECO:0000255" key="1">
    <source>
        <dbReference type="HAMAP-Rule" id="MF_00735"/>
    </source>
</evidence>